<accession>B3QCF3</accession>
<keyword id="KW-0489">Methyltransferase</keyword>
<keyword id="KW-0949">S-adenosyl-L-methionine</keyword>
<keyword id="KW-0808">Transferase</keyword>
<keyword id="KW-0831">Ubiquinone biosynthesis</keyword>
<name>UBIG_RHOPT</name>
<reference key="1">
    <citation type="submission" date="2008-05" db="EMBL/GenBank/DDBJ databases">
        <title>Complete sequence of Rhodopseudomonas palustris TIE-1.</title>
        <authorList>
            <consortium name="US DOE Joint Genome Institute"/>
            <person name="Lucas S."/>
            <person name="Copeland A."/>
            <person name="Lapidus A."/>
            <person name="Glavina del Rio T."/>
            <person name="Dalin E."/>
            <person name="Tice H."/>
            <person name="Pitluck S."/>
            <person name="Chain P."/>
            <person name="Malfatti S."/>
            <person name="Shin M."/>
            <person name="Vergez L."/>
            <person name="Lang D."/>
            <person name="Schmutz J."/>
            <person name="Larimer F."/>
            <person name="Land M."/>
            <person name="Hauser L."/>
            <person name="Kyrpides N."/>
            <person name="Mikhailova N."/>
            <person name="Emerson D."/>
            <person name="Newman D.K."/>
            <person name="Roden E."/>
            <person name="Richardson P."/>
        </authorList>
    </citation>
    <scope>NUCLEOTIDE SEQUENCE [LARGE SCALE GENOMIC DNA]</scope>
    <source>
        <strain>TIE-1</strain>
    </source>
</reference>
<comment type="function">
    <text evidence="1">O-methyltransferase that catalyzes the 2 O-methylation steps in the ubiquinone biosynthetic pathway.</text>
</comment>
<comment type="catalytic activity">
    <reaction evidence="1">
        <text>a 3-demethylubiquinol + S-adenosyl-L-methionine = a ubiquinol + S-adenosyl-L-homocysteine + H(+)</text>
        <dbReference type="Rhea" id="RHEA:44380"/>
        <dbReference type="Rhea" id="RHEA-COMP:9566"/>
        <dbReference type="Rhea" id="RHEA-COMP:10914"/>
        <dbReference type="ChEBI" id="CHEBI:15378"/>
        <dbReference type="ChEBI" id="CHEBI:17976"/>
        <dbReference type="ChEBI" id="CHEBI:57856"/>
        <dbReference type="ChEBI" id="CHEBI:59789"/>
        <dbReference type="ChEBI" id="CHEBI:84422"/>
        <dbReference type="EC" id="2.1.1.64"/>
    </reaction>
</comment>
<comment type="catalytic activity">
    <reaction evidence="1">
        <text>a 3-(all-trans-polyprenyl)benzene-1,2-diol + S-adenosyl-L-methionine = a 2-methoxy-6-(all-trans-polyprenyl)phenol + S-adenosyl-L-homocysteine + H(+)</text>
        <dbReference type="Rhea" id="RHEA:31411"/>
        <dbReference type="Rhea" id="RHEA-COMP:9550"/>
        <dbReference type="Rhea" id="RHEA-COMP:9551"/>
        <dbReference type="ChEBI" id="CHEBI:15378"/>
        <dbReference type="ChEBI" id="CHEBI:57856"/>
        <dbReference type="ChEBI" id="CHEBI:59789"/>
        <dbReference type="ChEBI" id="CHEBI:62729"/>
        <dbReference type="ChEBI" id="CHEBI:62731"/>
        <dbReference type="EC" id="2.1.1.222"/>
    </reaction>
</comment>
<comment type="pathway">
    <text evidence="1">Cofactor biosynthesis; ubiquinone biosynthesis.</text>
</comment>
<comment type="similarity">
    <text evidence="1">Belongs to the methyltransferase superfamily. UbiG/COQ3 family.</text>
</comment>
<gene>
    <name evidence="1" type="primary">ubiG</name>
    <name type="ordered locus">Rpal_0607</name>
</gene>
<feature type="chain" id="PRO_1000199694" description="Ubiquinone biosynthesis O-methyltransferase">
    <location>
        <begin position="1"/>
        <end position="253"/>
    </location>
</feature>
<feature type="binding site" evidence="1">
    <location>
        <position position="47"/>
    </location>
    <ligand>
        <name>S-adenosyl-L-methionine</name>
        <dbReference type="ChEBI" id="CHEBI:59789"/>
    </ligand>
</feature>
<feature type="binding site" evidence="1">
    <location>
        <position position="78"/>
    </location>
    <ligand>
        <name>S-adenosyl-L-methionine</name>
        <dbReference type="ChEBI" id="CHEBI:59789"/>
    </ligand>
</feature>
<feature type="binding site" evidence="1">
    <location>
        <position position="99"/>
    </location>
    <ligand>
        <name>S-adenosyl-L-methionine</name>
        <dbReference type="ChEBI" id="CHEBI:59789"/>
    </ligand>
</feature>
<feature type="binding site" evidence="1">
    <location>
        <position position="141"/>
    </location>
    <ligand>
        <name>S-adenosyl-L-methionine</name>
        <dbReference type="ChEBI" id="CHEBI:59789"/>
    </ligand>
</feature>
<dbReference type="EC" id="2.1.1.222" evidence="1"/>
<dbReference type="EC" id="2.1.1.64" evidence="1"/>
<dbReference type="EMBL" id="CP001096">
    <property type="protein sequence ID" value="ACE99166.1"/>
    <property type="molecule type" value="Genomic_DNA"/>
</dbReference>
<dbReference type="RefSeq" id="WP_012494270.1">
    <property type="nucleotide sequence ID" value="NC_011004.1"/>
</dbReference>
<dbReference type="SMR" id="B3QCF3"/>
<dbReference type="GeneID" id="66891623"/>
<dbReference type="KEGG" id="rpt:Rpal_0607"/>
<dbReference type="HOGENOM" id="CLU_042432_0_0_5"/>
<dbReference type="OrthoDB" id="9801538at2"/>
<dbReference type="UniPathway" id="UPA00232"/>
<dbReference type="Proteomes" id="UP000001725">
    <property type="component" value="Chromosome"/>
</dbReference>
<dbReference type="GO" id="GO:0102208">
    <property type="term" value="F:2-polyprenyl-6-hydroxyphenol methylase activity"/>
    <property type="evidence" value="ECO:0007669"/>
    <property type="project" value="UniProtKB-EC"/>
</dbReference>
<dbReference type="GO" id="GO:0061542">
    <property type="term" value="F:3-demethylubiquinol 3-O-methyltransferase activity"/>
    <property type="evidence" value="ECO:0007669"/>
    <property type="project" value="UniProtKB-UniRule"/>
</dbReference>
<dbReference type="GO" id="GO:0010420">
    <property type="term" value="F:polyprenyldihydroxybenzoate methyltransferase activity"/>
    <property type="evidence" value="ECO:0007669"/>
    <property type="project" value="InterPro"/>
</dbReference>
<dbReference type="GO" id="GO:0032259">
    <property type="term" value="P:methylation"/>
    <property type="evidence" value="ECO:0007669"/>
    <property type="project" value="UniProtKB-KW"/>
</dbReference>
<dbReference type="CDD" id="cd02440">
    <property type="entry name" value="AdoMet_MTases"/>
    <property type="match status" value="1"/>
</dbReference>
<dbReference type="Gene3D" id="3.40.50.150">
    <property type="entry name" value="Vaccinia Virus protein VP39"/>
    <property type="match status" value="1"/>
</dbReference>
<dbReference type="HAMAP" id="MF_00472">
    <property type="entry name" value="UbiG"/>
    <property type="match status" value="1"/>
</dbReference>
<dbReference type="InterPro" id="IPR029063">
    <property type="entry name" value="SAM-dependent_MTases_sf"/>
</dbReference>
<dbReference type="InterPro" id="IPR010233">
    <property type="entry name" value="UbiG_MeTrfase"/>
</dbReference>
<dbReference type="NCBIfam" id="TIGR01983">
    <property type="entry name" value="UbiG"/>
    <property type="match status" value="1"/>
</dbReference>
<dbReference type="PANTHER" id="PTHR43464">
    <property type="entry name" value="METHYLTRANSFERASE"/>
    <property type="match status" value="1"/>
</dbReference>
<dbReference type="PANTHER" id="PTHR43464:SF19">
    <property type="entry name" value="UBIQUINONE BIOSYNTHESIS O-METHYLTRANSFERASE, MITOCHONDRIAL"/>
    <property type="match status" value="1"/>
</dbReference>
<dbReference type="Pfam" id="PF13489">
    <property type="entry name" value="Methyltransf_23"/>
    <property type="match status" value="1"/>
</dbReference>
<dbReference type="SUPFAM" id="SSF53335">
    <property type="entry name" value="S-adenosyl-L-methionine-dependent methyltransferases"/>
    <property type="match status" value="1"/>
</dbReference>
<protein>
    <recommendedName>
        <fullName evidence="1">Ubiquinone biosynthesis O-methyltransferase</fullName>
    </recommendedName>
    <alternativeName>
        <fullName evidence="1">2-polyprenyl-6-hydroxyphenol methylase</fullName>
        <ecNumber evidence="1">2.1.1.222</ecNumber>
    </alternativeName>
    <alternativeName>
        <fullName evidence="1">3-demethylubiquinone 3-O-methyltransferase</fullName>
        <ecNumber evidence="1">2.1.1.64</ecNumber>
    </alternativeName>
</protein>
<proteinExistence type="inferred from homology"/>
<evidence type="ECO:0000255" key="1">
    <source>
        <dbReference type="HAMAP-Rule" id="MF_00472"/>
    </source>
</evidence>
<sequence length="253" mass="28165">MALQPESPGQPASTVDPAEIAKFSKLSAEWWDPTGRMAPLHRINPLRISFIRDAACRKFERNAKSLSCLEGLRMLDIGCGAGLLCEPFTRLGAQVIGIDPSATNIAAAKLHADKSHLAIDYRNVMVEEIDPRERFDIVLAMEVIEHVTDVGAFLSRCAALMKPTGIMVVATLNRNWKSFALAIVGAEYVMRWLPRGTHQWDKFVTPAELEQHLNRLKLIVTEQSGLVFNPLADRWKLSPDMDVNYMMVAEAAP</sequence>
<organism>
    <name type="scientific">Rhodopseudomonas palustris (strain TIE-1)</name>
    <dbReference type="NCBI Taxonomy" id="395960"/>
    <lineage>
        <taxon>Bacteria</taxon>
        <taxon>Pseudomonadati</taxon>
        <taxon>Pseudomonadota</taxon>
        <taxon>Alphaproteobacteria</taxon>
        <taxon>Hyphomicrobiales</taxon>
        <taxon>Nitrobacteraceae</taxon>
        <taxon>Rhodopseudomonas</taxon>
    </lineage>
</organism>